<name>DNAJ_PECAS</name>
<protein>
    <recommendedName>
        <fullName evidence="1">Chaperone protein DnaJ</fullName>
    </recommendedName>
</protein>
<keyword id="KW-0143">Chaperone</keyword>
<keyword id="KW-0963">Cytoplasm</keyword>
<keyword id="KW-0235">DNA replication</keyword>
<keyword id="KW-0479">Metal-binding</keyword>
<keyword id="KW-1185">Reference proteome</keyword>
<keyword id="KW-0677">Repeat</keyword>
<keyword id="KW-0346">Stress response</keyword>
<keyword id="KW-0862">Zinc</keyword>
<keyword id="KW-0863">Zinc-finger</keyword>
<dbReference type="EMBL" id="BX950851">
    <property type="protein sequence ID" value="CAG76779.1"/>
    <property type="molecule type" value="Genomic_DNA"/>
</dbReference>
<dbReference type="RefSeq" id="WP_011095379.1">
    <property type="nucleotide sequence ID" value="NC_004547.2"/>
</dbReference>
<dbReference type="SMR" id="Q6D0B8"/>
<dbReference type="STRING" id="218491.ECA3881"/>
<dbReference type="GeneID" id="57210498"/>
<dbReference type="KEGG" id="eca:ECA3881"/>
<dbReference type="PATRIC" id="fig|218491.5.peg.3938"/>
<dbReference type="eggNOG" id="COG0484">
    <property type="taxonomic scope" value="Bacteria"/>
</dbReference>
<dbReference type="HOGENOM" id="CLU_017633_0_7_6"/>
<dbReference type="OrthoDB" id="9779889at2"/>
<dbReference type="Proteomes" id="UP000007966">
    <property type="component" value="Chromosome"/>
</dbReference>
<dbReference type="GO" id="GO:0005737">
    <property type="term" value="C:cytoplasm"/>
    <property type="evidence" value="ECO:0007669"/>
    <property type="project" value="UniProtKB-SubCell"/>
</dbReference>
<dbReference type="GO" id="GO:0005524">
    <property type="term" value="F:ATP binding"/>
    <property type="evidence" value="ECO:0007669"/>
    <property type="project" value="InterPro"/>
</dbReference>
<dbReference type="GO" id="GO:0031072">
    <property type="term" value="F:heat shock protein binding"/>
    <property type="evidence" value="ECO:0007669"/>
    <property type="project" value="InterPro"/>
</dbReference>
<dbReference type="GO" id="GO:0051082">
    <property type="term" value="F:unfolded protein binding"/>
    <property type="evidence" value="ECO:0007669"/>
    <property type="project" value="UniProtKB-UniRule"/>
</dbReference>
<dbReference type="GO" id="GO:0008270">
    <property type="term" value="F:zinc ion binding"/>
    <property type="evidence" value="ECO:0007669"/>
    <property type="project" value="UniProtKB-UniRule"/>
</dbReference>
<dbReference type="GO" id="GO:0051085">
    <property type="term" value="P:chaperone cofactor-dependent protein refolding"/>
    <property type="evidence" value="ECO:0007669"/>
    <property type="project" value="TreeGrafter"/>
</dbReference>
<dbReference type="GO" id="GO:0006260">
    <property type="term" value="P:DNA replication"/>
    <property type="evidence" value="ECO:0007669"/>
    <property type="project" value="UniProtKB-KW"/>
</dbReference>
<dbReference type="GO" id="GO:0042026">
    <property type="term" value="P:protein refolding"/>
    <property type="evidence" value="ECO:0007669"/>
    <property type="project" value="TreeGrafter"/>
</dbReference>
<dbReference type="GO" id="GO:0009408">
    <property type="term" value="P:response to heat"/>
    <property type="evidence" value="ECO:0007669"/>
    <property type="project" value="InterPro"/>
</dbReference>
<dbReference type="CDD" id="cd06257">
    <property type="entry name" value="DnaJ"/>
    <property type="match status" value="1"/>
</dbReference>
<dbReference type="CDD" id="cd10747">
    <property type="entry name" value="DnaJ_C"/>
    <property type="match status" value="1"/>
</dbReference>
<dbReference type="CDD" id="cd10719">
    <property type="entry name" value="DnaJ_zf"/>
    <property type="match status" value="1"/>
</dbReference>
<dbReference type="FunFam" id="1.10.287.110:FF:000003">
    <property type="entry name" value="Molecular chaperone DnaJ"/>
    <property type="match status" value="1"/>
</dbReference>
<dbReference type="FunFam" id="2.10.230.10:FF:000002">
    <property type="entry name" value="Molecular chaperone DnaJ"/>
    <property type="match status" value="1"/>
</dbReference>
<dbReference type="FunFam" id="2.60.260.20:FF:000004">
    <property type="entry name" value="Molecular chaperone DnaJ"/>
    <property type="match status" value="1"/>
</dbReference>
<dbReference type="Gene3D" id="1.10.287.110">
    <property type="entry name" value="DnaJ domain"/>
    <property type="match status" value="1"/>
</dbReference>
<dbReference type="Gene3D" id="2.10.230.10">
    <property type="entry name" value="Heat shock protein DnaJ, cysteine-rich domain"/>
    <property type="match status" value="1"/>
</dbReference>
<dbReference type="Gene3D" id="2.60.260.20">
    <property type="entry name" value="Urease metallochaperone UreE, N-terminal domain"/>
    <property type="match status" value="2"/>
</dbReference>
<dbReference type="HAMAP" id="MF_01152">
    <property type="entry name" value="DnaJ"/>
    <property type="match status" value="1"/>
</dbReference>
<dbReference type="InterPro" id="IPR012724">
    <property type="entry name" value="DnaJ"/>
</dbReference>
<dbReference type="InterPro" id="IPR002939">
    <property type="entry name" value="DnaJ_C"/>
</dbReference>
<dbReference type="InterPro" id="IPR001623">
    <property type="entry name" value="DnaJ_domain"/>
</dbReference>
<dbReference type="InterPro" id="IPR018253">
    <property type="entry name" value="DnaJ_domain_CS"/>
</dbReference>
<dbReference type="InterPro" id="IPR008971">
    <property type="entry name" value="HSP40/DnaJ_pept-bd"/>
</dbReference>
<dbReference type="InterPro" id="IPR001305">
    <property type="entry name" value="HSP_DnaJ_Cys-rich_dom"/>
</dbReference>
<dbReference type="InterPro" id="IPR036410">
    <property type="entry name" value="HSP_DnaJ_Cys-rich_dom_sf"/>
</dbReference>
<dbReference type="InterPro" id="IPR036869">
    <property type="entry name" value="J_dom_sf"/>
</dbReference>
<dbReference type="NCBIfam" id="TIGR02349">
    <property type="entry name" value="DnaJ_bact"/>
    <property type="match status" value="1"/>
</dbReference>
<dbReference type="NCBIfam" id="NF008035">
    <property type="entry name" value="PRK10767.1"/>
    <property type="match status" value="1"/>
</dbReference>
<dbReference type="PANTHER" id="PTHR43096:SF48">
    <property type="entry name" value="CHAPERONE PROTEIN DNAJ"/>
    <property type="match status" value="1"/>
</dbReference>
<dbReference type="PANTHER" id="PTHR43096">
    <property type="entry name" value="DNAJ HOMOLOG 1, MITOCHONDRIAL-RELATED"/>
    <property type="match status" value="1"/>
</dbReference>
<dbReference type="Pfam" id="PF00226">
    <property type="entry name" value="DnaJ"/>
    <property type="match status" value="1"/>
</dbReference>
<dbReference type="Pfam" id="PF01556">
    <property type="entry name" value="DnaJ_C"/>
    <property type="match status" value="1"/>
</dbReference>
<dbReference type="Pfam" id="PF00684">
    <property type="entry name" value="DnaJ_CXXCXGXG"/>
    <property type="match status" value="1"/>
</dbReference>
<dbReference type="PRINTS" id="PR00625">
    <property type="entry name" value="JDOMAIN"/>
</dbReference>
<dbReference type="SMART" id="SM00271">
    <property type="entry name" value="DnaJ"/>
    <property type="match status" value="1"/>
</dbReference>
<dbReference type="SUPFAM" id="SSF46565">
    <property type="entry name" value="Chaperone J-domain"/>
    <property type="match status" value="1"/>
</dbReference>
<dbReference type="SUPFAM" id="SSF57938">
    <property type="entry name" value="DnaJ/Hsp40 cysteine-rich domain"/>
    <property type="match status" value="1"/>
</dbReference>
<dbReference type="SUPFAM" id="SSF49493">
    <property type="entry name" value="HSP40/DnaJ peptide-binding domain"/>
    <property type="match status" value="2"/>
</dbReference>
<dbReference type="PROSITE" id="PS00636">
    <property type="entry name" value="DNAJ_1"/>
    <property type="match status" value="1"/>
</dbReference>
<dbReference type="PROSITE" id="PS50076">
    <property type="entry name" value="DNAJ_2"/>
    <property type="match status" value="1"/>
</dbReference>
<dbReference type="PROSITE" id="PS51188">
    <property type="entry name" value="ZF_CR"/>
    <property type="match status" value="1"/>
</dbReference>
<organism>
    <name type="scientific">Pectobacterium atrosepticum (strain SCRI 1043 / ATCC BAA-672)</name>
    <name type="common">Erwinia carotovora subsp. atroseptica</name>
    <dbReference type="NCBI Taxonomy" id="218491"/>
    <lineage>
        <taxon>Bacteria</taxon>
        <taxon>Pseudomonadati</taxon>
        <taxon>Pseudomonadota</taxon>
        <taxon>Gammaproteobacteria</taxon>
        <taxon>Enterobacterales</taxon>
        <taxon>Pectobacteriaceae</taxon>
        <taxon>Pectobacterium</taxon>
    </lineage>
</organism>
<gene>
    <name evidence="1" type="primary">dnaJ</name>
    <name type="ordered locus">ECA3881</name>
</gene>
<comment type="function">
    <text evidence="1">Participates actively in the response to hyperosmotic and heat shock by preventing the aggregation of stress-denatured proteins and by disaggregating proteins, also in an autonomous, DnaK-independent fashion. Unfolded proteins bind initially to DnaJ; upon interaction with the DnaJ-bound protein, DnaK hydrolyzes its bound ATP, resulting in the formation of a stable complex. GrpE releases ADP from DnaK; ATP binding to DnaK triggers the release of the substrate protein, thus completing the reaction cycle. Several rounds of ATP-dependent interactions between DnaJ, DnaK and GrpE are required for fully efficient folding. Also involved, together with DnaK and GrpE, in the DNA replication of plasmids through activation of initiation proteins.</text>
</comment>
<comment type="cofactor">
    <cofactor evidence="1">
        <name>Zn(2+)</name>
        <dbReference type="ChEBI" id="CHEBI:29105"/>
    </cofactor>
    <text evidence="1">Binds 2 Zn(2+) ions per monomer.</text>
</comment>
<comment type="subunit">
    <text evidence="1">Homodimer.</text>
</comment>
<comment type="subcellular location">
    <subcellularLocation>
        <location evidence="1">Cytoplasm</location>
    </subcellularLocation>
</comment>
<comment type="domain">
    <text evidence="1">The J domain is necessary and sufficient to stimulate DnaK ATPase activity. Zinc center 1 plays an important role in the autonomous, DnaK-independent chaperone activity of DnaJ. Zinc center 2 is essential for interaction with DnaK and for DnaJ activity.</text>
</comment>
<comment type="similarity">
    <text evidence="1">Belongs to the DnaJ family.</text>
</comment>
<evidence type="ECO:0000255" key="1">
    <source>
        <dbReference type="HAMAP-Rule" id="MF_01152"/>
    </source>
</evidence>
<feature type="chain" id="PRO_0000070784" description="Chaperone protein DnaJ">
    <location>
        <begin position="1"/>
        <end position="379"/>
    </location>
</feature>
<feature type="domain" description="J" evidence="1">
    <location>
        <begin position="5"/>
        <end position="70"/>
    </location>
</feature>
<feature type="repeat" description="CXXCXGXG motif">
    <location>
        <begin position="147"/>
        <end position="154"/>
    </location>
</feature>
<feature type="repeat" description="CXXCXGXG motif">
    <location>
        <begin position="164"/>
        <end position="171"/>
    </location>
</feature>
<feature type="repeat" description="CXXCXGXG motif">
    <location>
        <begin position="186"/>
        <end position="193"/>
    </location>
</feature>
<feature type="repeat" description="CXXCXGXG motif">
    <location>
        <begin position="200"/>
        <end position="207"/>
    </location>
</feature>
<feature type="zinc finger region" description="CR-type" evidence="1">
    <location>
        <begin position="134"/>
        <end position="212"/>
    </location>
</feature>
<feature type="binding site" evidence="1">
    <location>
        <position position="147"/>
    </location>
    <ligand>
        <name>Zn(2+)</name>
        <dbReference type="ChEBI" id="CHEBI:29105"/>
        <label>1</label>
    </ligand>
</feature>
<feature type="binding site" evidence="1">
    <location>
        <position position="150"/>
    </location>
    <ligand>
        <name>Zn(2+)</name>
        <dbReference type="ChEBI" id="CHEBI:29105"/>
        <label>1</label>
    </ligand>
</feature>
<feature type="binding site" evidence="1">
    <location>
        <position position="164"/>
    </location>
    <ligand>
        <name>Zn(2+)</name>
        <dbReference type="ChEBI" id="CHEBI:29105"/>
        <label>2</label>
    </ligand>
</feature>
<feature type="binding site" evidence="1">
    <location>
        <position position="167"/>
    </location>
    <ligand>
        <name>Zn(2+)</name>
        <dbReference type="ChEBI" id="CHEBI:29105"/>
        <label>2</label>
    </ligand>
</feature>
<feature type="binding site" evidence="1">
    <location>
        <position position="186"/>
    </location>
    <ligand>
        <name>Zn(2+)</name>
        <dbReference type="ChEBI" id="CHEBI:29105"/>
        <label>2</label>
    </ligand>
</feature>
<feature type="binding site" evidence="1">
    <location>
        <position position="189"/>
    </location>
    <ligand>
        <name>Zn(2+)</name>
        <dbReference type="ChEBI" id="CHEBI:29105"/>
        <label>2</label>
    </ligand>
</feature>
<feature type="binding site" evidence="1">
    <location>
        <position position="200"/>
    </location>
    <ligand>
        <name>Zn(2+)</name>
        <dbReference type="ChEBI" id="CHEBI:29105"/>
        <label>1</label>
    </ligand>
</feature>
<feature type="binding site" evidence="1">
    <location>
        <position position="203"/>
    </location>
    <ligand>
        <name>Zn(2+)</name>
        <dbReference type="ChEBI" id="CHEBI:29105"/>
        <label>1</label>
    </ligand>
</feature>
<accession>Q6D0B8</accession>
<sequence>MAKQDYYESLGVAKSADDREIKKAYKRLAMKYHPDRNPGDSEAEAKFKEIKEAYEILIDSQKRAAYDQYGHAAFEQGGMGGGGGGGFGGGGADFGDIFGDVFGDIFGGGRRQRASRGSDLRYNMELSLEEAVRGVTKEIRIPALEECDVCHGNGAKPGSSPITCPTCHGNGQVQMRQGFFTVQQACPHCHGRGKIIKDPCIKCHGHGRVEKSKTLSVKIPAGVDTGDRIRLSGEGEAGDHGAPSGDLYVQVQVKAHPIFQREENNLYCEVPINFAMAALGGEIEVPTLDGRVKLKVPAETQTGKLFRMRGKGVKSVRGGAQGDLLCRVVVETPVNLNERQRQLLQELDESFGGPSGERNSPRSKNFFDGVKKFFDDLTR</sequence>
<proteinExistence type="inferred from homology"/>
<reference key="1">
    <citation type="journal article" date="2004" name="Proc. Natl. Acad. Sci. U.S.A.">
        <title>Genome sequence of the enterobacterial phytopathogen Erwinia carotovora subsp. atroseptica and characterization of virulence factors.</title>
        <authorList>
            <person name="Bell K.S."/>
            <person name="Sebaihia M."/>
            <person name="Pritchard L."/>
            <person name="Holden M.T.G."/>
            <person name="Hyman L.J."/>
            <person name="Holeva M.C."/>
            <person name="Thomson N.R."/>
            <person name="Bentley S.D."/>
            <person name="Churcher L.J.C."/>
            <person name="Mungall K."/>
            <person name="Atkin R."/>
            <person name="Bason N."/>
            <person name="Brooks K."/>
            <person name="Chillingworth T."/>
            <person name="Clark K."/>
            <person name="Doggett J."/>
            <person name="Fraser A."/>
            <person name="Hance Z."/>
            <person name="Hauser H."/>
            <person name="Jagels K."/>
            <person name="Moule S."/>
            <person name="Norbertczak H."/>
            <person name="Ormond D."/>
            <person name="Price C."/>
            <person name="Quail M.A."/>
            <person name="Sanders M."/>
            <person name="Walker D."/>
            <person name="Whitehead S."/>
            <person name="Salmond G.P.C."/>
            <person name="Birch P.R.J."/>
            <person name="Parkhill J."/>
            <person name="Toth I.K."/>
        </authorList>
    </citation>
    <scope>NUCLEOTIDE SEQUENCE [LARGE SCALE GENOMIC DNA]</scope>
    <source>
        <strain>SCRI 1043 / ATCC BAA-672</strain>
    </source>
</reference>